<comment type="subcellular location">
    <subcellularLocation>
        <location evidence="1">Cytoplasm</location>
    </subcellularLocation>
    <subcellularLocation>
        <location evidence="1">Nucleus</location>
        <location evidence="1">Nucleolus</location>
    </subcellularLocation>
</comment>
<comment type="alternative products">
    <event type="alternative splicing"/>
    <isoform>
        <id>Q91WJ7-1</id>
        <name>1</name>
        <sequence type="displayed"/>
    </isoform>
    <isoform>
        <id>Q91WJ7-2</id>
        <name>2</name>
        <sequence type="described" ref="VSP_028793"/>
    </isoform>
</comment>
<comment type="similarity">
    <text evidence="6">Belongs to the SPATS2 family.</text>
</comment>
<keyword id="KW-0007">Acetylation</keyword>
<keyword id="KW-0025">Alternative splicing</keyword>
<keyword id="KW-0175">Coiled coil</keyword>
<keyword id="KW-0963">Cytoplasm</keyword>
<keyword id="KW-0539">Nucleus</keyword>
<keyword id="KW-0597">Phosphoprotein</keyword>
<keyword id="KW-1185">Reference proteome</keyword>
<organism>
    <name type="scientific">Mus musculus</name>
    <name type="common">Mouse</name>
    <dbReference type="NCBI Taxonomy" id="10090"/>
    <lineage>
        <taxon>Eukaryota</taxon>
        <taxon>Metazoa</taxon>
        <taxon>Chordata</taxon>
        <taxon>Craniata</taxon>
        <taxon>Vertebrata</taxon>
        <taxon>Euteleostomi</taxon>
        <taxon>Mammalia</taxon>
        <taxon>Eutheria</taxon>
        <taxon>Euarchontoglires</taxon>
        <taxon>Glires</taxon>
        <taxon>Rodentia</taxon>
        <taxon>Myomorpha</taxon>
        <taxon>Muroidea</taxon>
        <taxon>Muridae</taxon>
        <taxon>Murinae</taxon>
        <taxon>Mus</taxon>
        <taxon>Mus</taxon>
    </lineage>
</organism>
<feature type="initiator methionine" description="Removed" evidence="2">
    <location>
        <position position="1"/>
    </location>
</feature>
<feature type="chain" id="PRO_0000307700" description="SPATS2-like protein">
    <location>
        <begin position="2"/>
        <end position="558"/>
    </location>
</feature>
<feature type="region of interest" description="Disordered" evidence="4">
    <location>
        <begin position="63"/>
        <end position="204"/>
    </location>
</feature>
<feature type="region of interest" description="Disordered" evidence="4">
    <location>
        <begin position="385"/>
        <end position="406"/>
    </location>
</feature>
<feature type="region of interest" description="Disordered" evidence="4">
    <location>
        <begin position="421"/>
        <end position="514"/>
    </location>
</feature>
<feature type="coiled-coil region" evidence="3">
    <location>
        <begin position="279"/>
        <end position="344"/>
    </location>
</feature>
<feature type="compositionally biased region" description="Basic residues" evidence="4">
    <location>
        <begin position="63"/>
        <end position="79"/>
    </location>
</feature>
<feature type="compositionally biased region" description="Basic and acidic residues" evidence="4">
    <location>
        <begin position="80"/>
        <end position="92"/>
    </location>
</feature>
<feature type="compositionally biased region" description="Basic and acidic residues" evidence="4">
    <location>
        <begin position="110"/>
        <end position="142"/>
    </location>
</feature>
<feature type="compositionally biased region" description="Polar residues" evidence="4">
    <location>
        <begin position="421"/>
        <end position="433"/>
    </location>
</feature>
<feature type="compositionally biased region" description="Basic residues" evidence="4">
    <location>
        <begin position="469"/>
        <end position="485"/>
    </location>
</feature>
<feature type="modified residue" description="N-acetylalanine" evidence="2">
    <location>
        <position position="2"/>
    </location>
</feature>
<feature type="modified residue" description="Phosphoserine" evidence="2">
    <location>
        <position position="120"/>
    </location>
</feature>
<feature type="splice variant" id="VSP_028793" description="In isoform 2." evidence="5">
    <location>
        <position position="427"/>
    </location>
</feature>
<proteinExistence type="evidence at transcript level"/>
<reference key="1">
    <citation type="journal article" date="2005" name="Science">
        <title>The transcriptional landscape of the mammalian genome.</title>
        <authorList>
            <person name="Carninci P."/>
            <person name="Kasukawa T."/>
            <person name="Katayama S."/>
            <person name="Gough J."/>
            <person name="Frith M.C."/>
            <person name="Maeda N."/>
            <person name="Oyama R."/>
            <person name="Ravasi T."/>
            <person name="Lenhard B."/>
            <person name="Wells C."/>
            <person name="Kodzius R."/>
            <person name="Shimokawa K."/>
            <person name="Bajic V.B."/>
            <person name="Brenner S.E."/>
            <person name="Batalov S."/>
            <person name="Forrest A.R."/>
            <person name="Zavolan M."/>
            <person name="Davis M.J."/>
            <person name="Wilming L.G."/>
            <person name="Aidinis V."/>
            <person name="Allen J.E."/>
            <person name="Ambesi-Impiombato A."/>
            <person name="Apweiler R."/>
            <person name="Aturaliya R.N."/>
            <person name="Bailey T.L."/>
            <person name="Bansal M."/>
            <person name="Baxter L."/>
            <person name="Beisel K.W."/>
            <person name="Bersano T."/>
            <person name="Bono H."/>
            <person name="Chalk A.M."/>
            <person name="Chiu K.P."/>
            <person name="Choudhary V."/>
            <person name="Christoffels A."/>
            <person name="Clutterbuck D.R."/>
            <person name="Crowe M.L."/>
            <person name="Dalla E."/>
            <person name="Dalrymple B.P."/>
            <person name="de Bono B."/>
            <person name="Della Gatta G."/>
            <person name="di Bernardo D."/>
            <person name="Down T."/>
            <person name="Engstrom P."/>
            <person name="Fagiolini M."/>
            <person name="Faulkner G."/>
            <person name="Fletcher C.F."/>
            <person name="Fukushima T."/>
            <person name="Furuno M."/>
            <person name="Futaki S."/>
            <person name="Gariboldi M."/>
            <person name="Georgii-Hemming P."/>
            <person name="Gingeras T.R."/>
            <person name="Gojobori T."/>
            <person name="Green R.E."/>
            <person name="Gustincich S."/>
            <person name="Harbers M."/>
            <person name="Hayashi Y."/>
            <person name="Hensch T.K."/>
            <person name="Hirokawa N."/>
            <person name="Hill D."/>
            <person name="Huminiecki L."/>
            <person name="Iacono M."/>
            <person name="Ikeo K."/>
            <person name="Iwama A."/>
            <person name="Ishikawa T."/>
            <person name="Jakt M."/>
            <person name="Kanapin A."/>
            <person name="Katoh M."/>
            <person name="Kawasawa Y."/>
            <person name="Kelso J."/>
            <person name="Kitamura H."/>
            <person name="Kitano H."/>
            <person name="Kollias G."/>
            <person name="Krishnan S.P."/>
            <person name="Kruger A."/>
            <person name="Kummerfeld S.K."/>
            <person name="Kurochkin I.V."/>
            <person name="Lareau L.F."/>
            <person name="Lazarevic D."/>
            <person name="Lipovich L."/>
            <person name="Liu J."/>
            <person name="Liuni S."/>
            <person name="McWilliam S."/>
            <person name="Madan Babu M."/>
            <person name="Madera M."/>
            <person name="Marchionni L."/>
            <person name="Matsuda H."/>
            <person name="Matsuzawa S."/>
            <person name="Miki H."/>
            <person name="Mignone F."/>
            <person name="Miyake S."/>
            <person name="Morris K."/>
            <person name="Mottagui-Tabar S."/>
            <person name="Mulder N."/>
            <person name="Nakano N."/>
            <person name="Nakauchi H."/>
            <person name="Ng P."/>
            <person name="Nilsson R."/>
            <person name="Nishiguchi S."/>
            <person name="Nishikawa S."/>
            <person name="Nori F."/>
            <person name="Ohara O."/>
            <person name="Okazaki Y."/>
            <person name="Orlando V."/>
            <person name="Pang K.C."/>
            <person name="Pavan W.J."/>
            <person name="Pavesi G."/>
            <person name="Pesole G."/>
            <person name="Petrovsky N."/>
            <person name="Piazza S."/>
            <person name="Reed J."/>
            <person name="Reid J.F."/>
            <person name="Ring B.Z."/>
            <person name="Ringwald M."/>
            <person name="Rost B."/>
            <person name="Ruan Y."/>
            <person name="Salzberg S.L."/>
            <person name="Sandelin A."/>
            <person name="Schneider C."/>
            <person name="Schoenbach C."/>
            <person name="Sekiguchi K."/>
            <person name="Semple C.A."/>
            <person name="Seno S."/>
            <person name="Sessa L."/>
            <person name="Sheng Y."/>
            <person name="Shibata Y."/>
            <person name="Shimada H."/>
            <person name="Shimada K."/>
            <person name="Silva D."/>
            <person name="Sinclair B."/>
            <person name="Sperling S."/>
            <person name="Stupka E."/>
            <person name="Sugiura K."/>
            <person name="Sultana R."/>
            <person name="Takenaka Y."/>
            <person name="Taki K."/>
            <person name="Tammoja K."/>
            <person name="Tan S.L."/>
            <person name="Tang S."/>
            <person name="Taylor M.S."/>
            <person name="Tegner J."/>
            <person name="Teichmann S.A."/>
            <person name="Ueda H.R."/>
            <person name="van Nimwegen E."/>
            <person name="Verardo R."/>
            <person name="Wei C.L."/>
            <person name="Yagi K."/>
            <person name="Yamanishi H."/>
            <person name="Zabarovsky E."/>
            <person name="Zhu S."/>
            <person name="Zimmer A."/>
            <person name="Hide W."/>
            <person name="Bult C."/>
            <person name="Grimmond S.M."/>
            <person name="Teasdale R.D."/>
            <person name="Liu E.T."/>
            <person name="Brusic V."/>
            <person name="Quackenbush J."/>
            <person name="Wahlestedt C."/>
            <person name="Mattick J.S."/>
            <person name="Hume D.A."/>
            <person name="Kai C."/>
            <person name="Sasaki D."/>
            <person name="Tomaru Y."/>
            <person name="Fukuda S."/>
            <person name="Kanamori-Katayama M."/>
            <person name="Suzuki M."/>
            <person name="Aoki J."/>
            <person name="Arakawa T."/>
            <person name="Iida J."/>
            <person name="Imamura K."/>
            <person name="Itoh M."/>
            <person name="Kato T."/>
            <person name="Kawaji H."/>
            <person name="Kawagashira N."/>
            <person name="Kawashima T."/>
            <person name="Kojima M."/>
            <person name="Kondo S."/>
            <person name="Konno H."/>
            <person name="Nakano K."/>
            <person name="Ninomiya N."/>
            <person name="Nishio T."/>
            <person name="Okada M."/>
            <person name="Plessy C."/>
            <person name="Shibata K."/>
            <person name="Shiraki T."/>
            <person name="Suzuki S."/>
            <person name="Tagami M."/>
            <person name="Waki K."/>
            <person name="Watahiki A."/>
            <person name="Okamura-Oho Y."/>
            <person name="Suzuki H."/>
            <person name="Kawai J."/>
            <person name="Hayashizaki Y."/>
        </authorList>
    </citation>
    <scope>NUCLEOTIDE SEQUENCE [LARGE SCALE MRNA] (ISOFORM 1)</scope>
    <source>
        <strain>C57BL/6J</strain>
        <tissue>Embryonic limb</tissue>
        <tissue>Olfactory bulb</tissue>
    </source>
</reference>
<reference key="2">
    <citation type="journal article" date="2004" name="Genome Res.">
        <title>The status, quality, and expansion of the NIH full-length cDNA project: the Mammalian Gene Collection (MGC).</title>
        <authorList>
            <consortium name="The MGC Project Team"/>
        </authorList>
    </citation>
    <scope>NUCLEOTIDE SEQUENCE [LARGE SCALE MRNA] (ISOFORMS 1 AND 2)</scope>
    <source>
        <strain>FVB/N</strain>
        <tissue>Colon</tissue>
        <tissue>Mammary tumor</tissue>
    </source>
</reference>
<dbReference type="EMBL" id="AK031266">
    <property type="protein sequence ID" value="BAC27328.1"/>
    <property type="molecule type" value="mRNA"/>
</dbReference>
<dbReference type="EMBL" id="AK032169">
    <property type="protein sequence ID" value="BAC27738.1"/>
    <property type="molecule type" value="mRNA"/>
</dbReference>
<dbReference type="EMBL" id="BC014764">
    <property type="protein sequence ID" value="AAH14764.1"/>
    <property type="molecule type" value="mRNA"/>
</dbReference>
<dbReference type="EMBL" id="BC021879">
    <property type="protein sequence ID" value="AAH21879.1"/>
    <property type="molecule type" value="mRNA"/>
</dbReference>
<dbReference type="EMBL" id="BC029001">
    <property type="protein sequence ID" value="AAH29001.1"/>
    <property type="molecule type" value="mRNA"/>
</dbReference>
<dbReference type="CCDS" id="CCDS48267.1">
    <molecule id="Q91WJ7-2"/>
</dbReference>
<dbReference type="RefSeq" id="NP_001158038.1">
    <molecule id="Q91WJ7-2"/>
    <property type="nucleotide sequence ID" value="NM_001164566.1"/>
</dbReference>
<dbReference type="RefSeq" id="NP_001355716.1">
    <molecule id="Q91WJ7-1"/>
    <property type="nucleotide sequence ID" value="NM_001368787.1"/>
</dbReference>
<dbReference type="RefSeq" id="NP_659131.2">
    <property type="nucleotide sequence ID" value="NM_144882.4"/>
</dbReference>
<dbReference type="RefSeq" id="XP_006496278.1">
    <molecule id="Q91WJ7-1"/>
    <property type="nucleotide sequence ID" value="XM_006496215.5"/>
</dbReference>
<dbReference type="RefSeq" id="XP_006496281.1">
    <molecule id="Q91WJ7-1"/>
    <property type="nucleotide sequence ID" value="XM_006496218.5"/>
</dbReference>
<dbReference type="RefSeq" id="XP_036008966.1">
    <molecule id="Q91WJ7-2"/>
    <property type="nucleotide sequence ID" value="XM_036153073.1"/>
</dbReference>
<dbReference type="RefSeq" id="XP_036008980.1">
    <molecule id="Q91WJ7-1"/>
    <property type="nucleotide sequence ID" value="XM_036153087.1"/>
</dbReference>
<dbReference type="SMR" id="Q91WJ7"/>
<dbReference type="BioGRID" id="212009">
    <property type="interactions" value="3"/>
</dbReference>
<dbReference type="FunCoup" id="Q91WJ7">
    <property type="interactions" value="669"/>
</dbReference>
<dbReference type="IntAct" id="Q91WJ7">
    <property type="interactions" value="1"/>
</dbReference>
<dbReference type="MINT" id="Q91WJ7"/>
<dbReference type="STRING" id="10090.ENSMUSP00000133054"/>
<dbReference type="iPTMnet" id="Q91WJ7"/>
<dbReference type="PhosphoSitePlus" id="Q91WJ7"/>
<dbReference type="PaxDb" id="10090-ENSMUSP00000133054"/>
<dbReference type="PeptideAtlas" id="Q91WJ7"/>
<dbReference type="ProteomicsDB" id="257358">
    <molecule id="Q91WJ7-1"/>
</dbReference>
<dbReference type="ProteomicsDB" id="257359">
    <molecule id="Q91WJ7-2"/>
</dbReference>
<dbReference type="Pumba" id="Q91WJ7"/>
<dbReference type="Antibodypedia" id="34086">
    <property type="antibodies" value="144 antibodies from 19 providers"/>
</dbReference>
<dbReference type="Ensembl" id="ENSMUST00000169772.3">
    <molecule id="Q91WJ7-2"/>
    <property type="protein sequence ID" value="ENSMUSP00000132975.2"/>
    <property type="gene ID" value="ENSMUSG00000038305.16"/>
</dbReference>
<dbReference type="Ensembl" id="ENSMUST00000170139.8">
    <molecule id="Q91WJ7-2"/>
    <property type="protein sequence ID" value="ENSMUSP00000127598.2"/>
    <property type="gene ID" value="ENSMUSG00000038305.16"/>
</dbReference>
<dbReference type="GeneID" id="67198"/>
<dbReference type="KEGG" id="mmu:67198"/>
<dbReference type="UCSC" id="uc007bbe.2">
    <molecule id="Q91WJ7-2"/>
    <property type="organism name" value="mouse"/>
</dbReference>
<dbReference type="AGR" id="MGI:1914448"/>
<dbReference type="CTD" id="26010"/>
<dbReference type="MGI" id="MGI:1914448">
    <property type="gene designation" value="Spats2l"/>
</dbReference>
<dbReference type="VEuPathDB" id="HostDB:ENSMUSG00000038305"/>
<dbReference type="eggNOG" id="ENOG502QY9Y">
    <property type="taxonomic scope" value="Eukaryota"/>
</dbReference>
<dbReference type="GeneTree" id="ENSGT00390000001138"/>
<dbReference type="InParanoid" id="Q91WJ7"/>
<dbReference type="OMA" id="NPKMMSS"/>
<dbReference type="OrthoDB" id="6136201at2759"/>
<dbReference type="PhylomeDB" id="Q91WJ7"/>
<dbReference type="BioGRID-ORCS" id="67198">
    <property type="hits" value="3 hits in 77 CRISPR screens"/>
</dbReference>
<dbReference type="ChiTaRS" id="Spats2l">
    <property type="organism name" value="mouse"/>
</dbReference>
<dbReference type="PRO" id="PR:Q91WJ7"/>
<dbReference type="Proteomes" id="UP000000589">
    <property type="component" value="Chromosome 1"/>
</dbReference>
<dbReference type="RNAct" id="Q91WJ7">
    <property type="molecule type" value="protein"/>
</dbReference>
<dbReference type="Bgee" id="ENSMUSG00000038305">
    <property type="expression patterns" value="Expressed in humerus cartilage element and 257 other cell types or tissues"/>
</dbReference>
<dbReference type="ExpressionAtlas" id="Q91WJ7">
    <property type="expression patterns" value="baseline and differential"/>
</dbReference>
<dbReference type="GO" id="GO:0005829">
    <property type="term" value="C:cytosol"/>
    <property type="evidence" value="ECO:0007669"/>
    <property type="project" value="Ensembl"/>
</dbReference>
<dbReference type="GO" id="GO:0005730">
    <property type="term" value="C:nucleolus"/>
    <property type="evidence" value="ECO:0007669"/>
    <property type="project" value="UniProtKB-SubCell"/>
</dbReference>
<dbReference type="GO" id="GO:0005654">
    <property type="term" value="C:nucleoplasm"/>
    <property type="evidence" value="ECO:0007669"/>
    <property type="project" value="Ensembl"/>
</dbReference>
<dbReference type="GO" id="GO:0032991">
    <property type="term" value="C:protein-containing complex"/>
    <property type="evidence" value="ECO:0007669"/>
    <property type="project" value="Ensembl"/>
</dbReference>
<dbReference type="InterPro" id="IPR009816">
    <property type="entry name" value="SPATS2-like"/>
</dbReference>
<dbReference type="InterPro" id="IPR009060">
    <property type="entry name" value="UBA-like_sf"/>
</dbReference>
<dbReference type="PANTHER" id="PTHR15623:SF8">
    <property type="entry name" value="SPATS2-LIKE PROTEIN"/>
    <property type="match status" value="1"/>
</dbReference>
<dbReference type="PANTHER" id="PTHR15623">
    <property type="entry name" value="SPERMATOGENESIS-ASSOCIATED SERINE-RICH PROTEIN 2-RELATED"/>
    <property type="match status" value="1"/>
</dbReference>
<dbReference type="Pfam" id="PF07139">
    <property type="entry name" value="SPATS2-like"/>
    <property type="match status" value="1"/>
</dbReference>
<dbReference type="SUPFAM" id="SSF46934">
    <property type="entry name" value="UBA-like"/>
    <property type="match status" value="1"/>
</dbReference>
<protein>
    <recommendedName>
        <fullName>SPATS2-like protein</fullName>
    </recommendedName>
</protein>
<accession>Q91WJ7</accession>
<accession>Q8K322</accession>
<accession>Q8VC37</accession>
<evidence type="ECO:0000250" key="1"/>
<evidence type="ECO:0000250" key="2">
    <source>
        <dbReference type="UniProtKB" id="Q9NUQ6"/>
    </source>
</evidence>
<evidence type="ECO:0000255" key="3"/>
<evidence type="ECO:0000256" key="4">
    <source>
        <dbReference type="SAM" id="MobiDB-lite"/>
    </source>
</evidence>
<evidence type="ECO:0000303" key="5">
    <source>
    </source>
</evidence>
<evidence type="ECO:0000305" key="6"/>
<name>SPS2L_MOUSE</name>
<sequence length="558" mass="61669">MAELNTHVNIKEKIYAVRSVVPNKSNNEIVLVLQQFDFNVDKAVQAFVDGSAIQVLKEWNMTGKKKNNKRKRSKSKQHQGNKDAKDKVERPEVGPLQPQAPLVQNGHMNGCEKDSSSPDSTREKLALTPREKKISILEEPPRAQRGVTEGGRLLQQKMSLDGNPRAIHGPSERSDGPQWSAGQPCNPSKPKAKTSPVKSNAPAAHLEIKPDELAKKRGPNIEKSVKDLQRCTVSLTRYRVMIKEEVDSSVKKIKAAFAELHNCIIDKEVSLMAEMDKVKEEAMDILTARQKKAEELKRLTDLASQMAEMQLAELRAEIKHFVSERKYDEELGKAARFSCDIEQLKAQILICGEITHPKNSYSSRTPCSSLLPLLNTHAVASGKQGNFARKSSGHNKPSEGKAANPKMVSGLANTADACHQTMPTNKQQNGPSSQRRRFNPQYHNRLNGPAKSQGGGNEADPMAKSNSRHEHRRQPHNGFRPKNKGGAKNQEAPLGTKAPEAPPHSEKARRRQHAADNLEARPFRGNVSRVSQCNLCPSRIEVSTEATVLSVPAVTLVA</sequence>
<gene>
    <name type="primary">Spats2l</name>
</gene>